<protein>
    <recommendedName>
        <fullName evidence="1">Gamma-glutamyl phosphate reductase</fullName>
        <shortName evidence="1">GPR</shortName>
        <ecNumber evidence="1">1.2.1.41</ecNumber>
    </recommendedName>
    <alternativeName>
        <fullName evidence="1">Glutamate-5-semialdehyde dehydrogenase</fullName>
    </alternativeName>
    <alternativeName>
        <fullName evidence="1">Glutamyl-gamma-semialdehyde dehydrogenase</fullName>
        <shortName evidence="1">GSA dehydrogenase</shortName>
    </alternativeName>
</protein>
<reference key="1">
    <citation type="journal article" date="2009" name="PLoS ONE">
        <title>The complete genome of Teredinibacter turnerae T7901: an intracellular endosymbiont of marine wood-boring bivalves (shipworms).</title>
        <authorList>
            <person name="Yang J.C."/>
            <person name="Madupu R."/>
            <person name="Durkin A.S."/>
            <person name="Ekborg N.A."/>
            <person name="Pedamallu C.S."/>
            <person name="Hostetler J.B."/>
            <person name="Radune D."/>
            <person name="Toms B.S."/>
            <person name="Henrissat B."/>
            <person name="Coutinho P.M."/>
            <person name="Schwarz S."/>
            <person name="Field L."/>
            <person name="Trindade-Silva A.E."/>
            <person name="Soares C.A.G."/>
            <person name="Elshahawi S."/>
            <person name="Hanora A."/>
            <person name="Schmidt E.W."/>
            <person name="Haygood M.G."/>
            <person name="Posfai J."/>
            <person name="Benner J."/>
            <person name="Madinger C."/>
            <person name="Nove J."/>
            <person name="Anton B."/>
            <person name="Chaudhary K."/>
            <person name="Foster J."/>
            <person name="Holman A."/>
            <person name="Kumar S."/>
            <person name="Lessard P.A."/>
            <person name="Luyten Y.A."/>
            <person name="Slatko B."/>
            <person name="Wood N."/>
            <person name="Wu B."/>
            <person name="Teplitski M."/>
            <person name="Mougous J.D."/>
            <person name="Ward N."/>
            <person name="Eisen J.A."/>
            <person name="Badger J.H."/>
            <person name="Distel D.L."/>
        </authorList>
    </citation>
    <scope>NUCLEOTIDE SEQUENCE [LARGE SCALE GENOMIC DNA]</scope>
    <source>
        <strain>ATCC 39867 / T7901</strain>
    </source>
</reference>
<name>PROA_TERTT</name>
<evidence type="ECO:0000255" key="1">
    <source>
        <dbReference type="HAMAP-Rule" id="MF_00412"/>
    </source>
</evidence>
<dbReference type="EC" id="1.2.1.41" evidence="1"/>
<dbReference type="EMBL" id="CP001614">
    <property type="protein sequence ID" value="ACR11946.1"/>
    <property type="molecule type" value="Genomic_DNA"/>
</dbReference>
<dbReference type="RefSeq" id="WP_015818058.1">
    <property type="nucleotide sequence ID" value="NC_012997.1"/>
</dbReference>
<dbReference type="SMR" id="C5BNN0"/>
<dbReference type="STRING" id="377629.TERTU_0600"/>
<dbReference type="KEGG" id="ttu:TERTU_0600"/>
<dbReference type="eggNOG" id="COG0014">
    <property type="taxonomic scope" value="Bacteria"/>
</dbReference>
<dbReference type="HOGENOM" id="CLU_030231_0_0_6"/>
<dbReference type="OrthoDB" id="9809970at2"/>
<dbReference type="UniPathway" id="UPA00098">
    <property type="reaction ID" value="UER00360"/>
</dbReference>
<dbReference type="Proteomes" id="UP000009080">
    <property type="component" value="Chromosome"/>
</dbReference>
<dbReference type="GO" id="GO:0005737">
    <property type="term" value="C:cytoplasm"/>
    <property type="evidence" value="ECO:0007669"/>
    <property type="project" value="UniProtKB-SubCell"/>
</dbReference>
<dbReference type="GO" id="GO:0004350">
    <property type="term" value="F:glutamate-5-semialdehyde dehydrogenase activity"/>
    <property type="evidence" value="ECO:0007669"/>
    <property type="project" value="UniProtKB-UniRule"/>
</dbReference>
<dbReference type="GO" id="GO:0050661">
    <property type="term" value="F:NADP binding"/>
    <property type="evidence" value="ECO:0007669"/>
    <property type="project" value="InterPro"/>
</dbReference>
<dbReference type="GO" id="GO:0055129">
    <property type="term" value="P:L-proline biosynthetic process"/>
    <property type="evidence" value="ECO:0007669"/>
    <property type="project" value="UniProtKB-UniRule"/>
</dbReference>
<dbReference type="CDD" id="cd07079">
    <property type="entry name" value="ALDH_F18-19_ProA-GPR"/>
    <property type="match status" value="1"/>
</dbReference>
<dbReference type="FunFam" id="3.40.309.10:FF:000006">
    <property type="entry name" value="Gamma-glutamyl phosphate reductase"/>
    <property type="match status" value="1"/>
</dbReference>
<dbReference type="Gene3D" id="3.40.605.10">
    <property type="entry name" value="Aldehyde Dehydrogenase, Chain A, domain 1"/>
    <property type="match status" value="1"/>
</dbReference>
<dbReference type="Gene3D" id="3.40.309.10">
    <property type="entry name" value="Aldehyde Dehydrogenase, Chain A, domain 2"/>
    <property type="match status" value="1"/>
</dbReference>
<dbReference type="HAMAP" id="MF_00412">
    <property type="entry name" value="ProA"/>
    <property type="match status" value="1"/>
</dbReference>
<dbReference type="InterPro" id="IPR016161">
    <property type="entry name" value="Ald_DH/histidinol_DH"/>
</dbReference>
<dbReference type="InterPro" id="IPR016163">
    <property type="entry name" value="Ald_DH_C"/>
</dbReference>
<dbReference type="InterPro" id="IPR016162">
    <property type="entry name" value="Ald_DH_N"/>
</dbReference>
<dbReference type="InterPro" id="IPR015590">
    <property type="entry name" value="Aldehyde_DH_dom"/>
</dbReference>
<dbReference type="InterPro" id="IPR020593">
    <property type="entry name" value="G-glutamylP_reductase_CS"/>
</dbReference>
<dbReference type="InterPro" id="IPR012134">
    <property type="entry name" value="Glu-5-SA_DH"/>
</dbReference>
<dbReference type="InterPro" id="IPR000965">
    <property type="entry name" value="GPR_dom"/>
</dbReference>
<dbReference type="NCBIfam" id="NF001221">
    <property type="entry name" value="PRK00197.1"/>
    <property type="match status" value="1"/>
</dbReference>
<dbReference type="NCBIfam" id="TIGR00407">
    <property type="entry name" value="proA"/>
    <property type="match status" value="1"/>
</dbReference>
<dbReference type="PANTHER" id="PTHR11063:SF8">
    <property type="entry name" value="DELTA-1-PYRROLINE-5-CARBOXYLATE SYNTHASE"/>
    <property type="match status" value="1"/>
</dbReference>
<dbReference type="PANTHER" id="PTHR11063">
    <property type="entry name" value="GLUTAMATE SEMIALDEHYDE DEHYDROGENASE"/>
    <property type="match status" value="1"/>
</dbReference>
<dbReference type="Pfam" id="PF00171">
    <property type="entry name" value="Aldedh"/>
    <property type="match status" value="1"/>
</dbReference>
<dbReference type="PIRSF" id="PIRSF000151">
    <property type="entry name" value="GPR"/>
    <property type="match status" value="1"/>
</dbReference>
<dbReference type="SUPFAM" id="SSF53720">
    <property type="entry name" value="ALDH-like"/>
    <property type="match status" value="1"/>
</dbReference>
<dbReference type="PROSITE" id="PS01223">
    <property type="entry name" value="PROA"/>
    <property type="match status" value="1"/>
</dbReference>
<keyword id="KW-0028">Amino-acid biosynthesis</keyword>
<keyword id="KW-0963">Cytoplasm</keyword>
<keyword id="KW-0521">NADP</keyword>
<keyword id="KW-0560">Oxidoreductase</keyword>
<keyword id="KW-0641">Proline biosynthesis</keyword>
<keyword id="KW-1185">Reference proteome</keyword>
<sequence>MTVKDYMQQLGRQARAASRDMLAASTDDKNRALVAIADAITANRELIIQENARDLENGRANGLEPAMLDRLELTPARFDGMIEGLRQVAALPDPCGEISDLKYRPSGIQVGKMRVPLGVVGIIYESRPNVTIDAASLCLKSGNATILRGGSEAIHSNQAIAKCIAAGLESVGLPASAVQVVETTDRAAVGELITMAEYVDVIVPRGGRSLIERISNDAKVSVIKHLDGICHVFIDDDADLDKAFNIALNSKTHRYGVCNAMETLLVASSVAEKILPRLATAYAEKSVELRGCDRTLAILPNINAAKPEDWDTEYLAPILAIRVVDDMTAAMDHIAAHSSAHTESIVTENYTKARKFMALVDSASVMVNASTRFADGFQYGLGAEIGISTDKIHARGPVGLEGLTSQKWIVFGDGEILN</sequence>
<gene>
    <name evidence="1" type="primary">proA</name>
    <name type="ordered locus">TERTU_0600</name>
</gene>
<organism>
    <name type="scientific">Teredinibacter turnerae (strain ATCC 39867 / T7901)</name>
    <dbReference type="NCBI Taxonomy" id="377629"/>
    <lineage>
        <taxon>Bacteria</taxon>
        <taxon>Pseudomonadati</taxon>
        <taxon>Pseudomonadota</taxon>
        <taxon>Gammaproteobacteria</taxon>
        <taxon>Cellvibrionales</taxon>
        <taxon>Cellvibrionaceae</taxon>
        <taxon>Teredinibacter</taxon>
    </lineage>
</organism>
<proteinExistence type="inferred from homology"/>
<feature type="chain" id="PRO_1000206003" description="Gamma-glutamyl phosphate reductase">
    <location>
        <begin position="1"/>
        <end position="418"/>
    </location>
</feature>
<accession>C5BNN0</accession>
<comment type="function">
    <text evidence="1">Catalyzes the NADPH-dependent reduction of L-glutamate 5-phosphate into L-glutamate 5-semialdehyde and phosphate. The product spontaneously undergoes cyclization to form 1-pyrroline-5-carboxylate.</text>
</comment>
<comment type="catalytic activity">
    <reaction evidence="1">
        <text>L-glutamate 5-semialdehyde + phosphate + NADP(+) = L-glutamyl 5-phosphate + NADPH + H(+)</text>
        <dbReference type="Rhea" id="RHEA:19541"/>
        <dbReference type="ChEBI" id="CHEBI:15378"/>
        <dbReference type="ChEBI" id="CHEBI:43474"/>
        <dbReference type="ChEBI" id="CHEBI:57783"/>
        <dbReference type="ChEBI" id="CHEBI:58066"/>
        <dbReference type="ChEBI" id="CHEBI:58274"/>
        <dbReference type="ChEBI" id="CHEBI:58349"/>
        <dbReference type="EC" id="1.2.1.41"/>
    </reaction>
</comment>
<comment type="pathway">
    <text evidence="1">Amino-acid biosynthesis; L-proline biosynthesis; L-glutamate 5-semialdehyde from L-glutamate: step 2/2.</text>
</comment>
<comment type="subcellular location">
    <subcellularLocation>
        <location evidence="1">Cytoplasm</location>
    </subcellularLocation>
</comment>
<comment type="similarity">
    <text evidence="1">Belongs to the gamma-glutamyl phosphate reductase family.</text>
</comment>